<sequence>MCKLEKFNYALFGNPIDHSQSPKIHNFFATQTGILHIYKAINIPLDQFSSVVSDFFKKNIKGANVTAPFKKEAYFFSDKLTERAKIAQSVNTLKKISDKCILGDNTDGIGLLSDLVRLNFIKKNFSILILGAGGAVKGVLLPLLSLGCSVYILNRTILNAKILVKQFNKYGKIFVFDRQNFKQQNFDLVINAMSRNTEKKNFLPLSLITSKTFFYDMNYSTRNTPFINWCSKAGGSFISNGIGMLVFQAAYSFLEWHNVLPEINYIINILNIK</sequence>
<accession>P46240</accession>
<evidence type="ECO:0000255" key="1">
    <source>
        <dbReference type="HAMAP-Rule" id="MF_00222"/>
    </source>
</evidence>
<evidence type="ECO:0000305" key="2"/>
<reference key="1">
    <citation type="journal article" date="1995" name="Gene">
        <title>Characterization of a putative 23S-5S rRNA operon of Buchnera aphidicola (endosymbiont of aphids) unlinked to the 16S rRNA-encoding gene.</title>
        <authorList>
            <person name="Rouhbakhsh D."/>
            <person name="Baumann P."/>
        </authorList>
    </citation>
    <scope>NUCLEOTIDE SEQUENCE [GENOMIC DNA]</scope>
</reference>
<reference key="2">
    <citation type="journal article" date="2002" name="Science">
        <title>50 million years of genomic stasis in endosymbiotic bacteria.</title>
        <authorList>
            <person name="Tamas I."/>
            <person name="Klasson L."/>
            <person name="Canbaeck B."/>
            <person name="Naeslund A.K."/>
            <person name="Eriksson A.-S."/>
            <person name="Wernegreen J.J."/>
            <person name="Sandstroem J.P."/>
            <person name="Moran N.A."/>
            <person name="Andersson S.G.E."/>
        </authorList>
    </citation>
    <scope>NUCLEOTIDE SEQUENCE [LARGE SCALE GENOMIC DNA]</scope>
    <source>
        <strain>Sg</strain>
    </source>
</reference>
<keyword id="KW-0028">Amino-acid biosynthesis</keyword>
<keyword id="KW-0057">Aromatic amino acid biosynthesis</keyword>
<keyword id="KW-0521">NADP</keyword>
<keyword id="KW-0560">Oxidoreductase</keyword>
<protein>
    <recommendedName>
        <fullName evidence="1">Shikimate dehydrogenase (NADP(+))</fullName>
        <shortName evidence="1">SDH</shortName>
        <ecNumber evidence="1">1.1.1.25</ecNumber>
    </recommendedName>
</protein>
<organism>
    <name type="scientific">Buchnera aphidicola subsp. Schizaphis graminum (strain Sg)</name>
    <dbReference type="NCBI Taxonomy" id="198804"/>
    <lineage>
        <taxon>Bacteria</taxon>
        <taxon>Pseudomonadati</taxon>
        <taxon>Pseudomonadota</taxon>
        <taxon>Gammaproteobacteria</taxon>
        <taxon>Enterobacterales</taxon>
        <taxon>Erwiniaceae</taxon>
        <taxon>Buchnera</taxon>
    </lineage>
</organism>
<gene>
    <name evidence="1" type="primary">aroE</name>
    <name type="ordered locus">BUsg_474</name>
</gene>
<name>AROE_BUCAP</name>
<feature type="chain" id="PRO_0000135996" description="Shikimate dehydrogenase (NADP(+))">
    <location>
        <begin position="1"/>
        <end position="273"/>
    </location>
</feature>
<feature type="active site" description="Proton acceptor" evidence="1">
    <location>
        <position position="70"/>
    </location>
</feature>
<feature type="binding site" evidence="1">
    <location>
        <begin position="19"/>
        <end position="21"/>
    </location>
    <ligand>
        <name>shikimate</name>
        <dbReference type="ChEBI" id="CHEBI:36208"/>
    </ligand>
</feature>
<feature type="binding site" evidence="1">
    <location>
        <position position="66"/>
    </location>
    <ligand>
        <name>shikimate</name>
        <dbReference type="ChEBI" id="CHEBI:36208"/>
    </ligand>
</feature>
<feature type="binding site" evidence="1">
    <location>
        <position position="82"/>
    </location>
    <ligand>
        <name>NADP(+)</name>
        <dbReference type="ChEBI" id="CHEBI:58349"/>
    </ligand>
</feature>
<feature type="binding site" evidence="1">
    <location>
        <position position="91"/>
    </location>
    <ligand>
        <name>shikimate</name>
        <dbReference type="ChEBI" id="CHEBI:36208"/>
    </ligand>
</feature>
<feature type="binding site" evidence="1">
    <location>
        <position position="107"/>
    </location>
    <ligand>
        <name>shikimate</name>
        <dbReference type="ChEBI" id="CHEBI:36208"/>
    </ligand>
</feature>
<feature type="binding site" evidence="1">
    <location>
        <begin position="131"/>
        <end position="135"/>
    </location>
    <ligand>
        <name>NADP(+)</name>
        <dbReference type="ChEBI" id="CHEBI:58349"/>
    </ligand>
</feature>
<feature type="binding site" evidence="1">
    <location>
        <position position="217"/>
    </location>
    <ligand>
        <name>NADP(+)</name>
        <dbReference type="ChEBI" id="CHEBI:58349"/>
    </ligand>
</feature>
<feature type="binding site" evidence="1">
    <location>
        <position position="219"/>
    </location>
    <ligand>
        <name>shikimate</name>
        <dbReference type="ChEBI" id="CHEBI:36208"/>
    </ligand>
</feature>
<feature type="binding site" evidence="1">
    <location>
        <position position="241"/>
    </location>
    <ligand>
        <name>NADP(+)</name>
        <dbReference type="ChEBI" id="CHEBI:58349"/>
    </ligand>
</feature>
<feature type="sequence conflict" description="In Ref. 1; AAD09433." evidence="2" ref="1">
    <original>LP</original>
    <variation>T</variation>
    <location>
        <begin position="203"/>
        <end position="204"/>
    </location>
</feature>
<feature type="sequence conflict" description="In Ref. 1; AAD09433." evidence="2" ref="1">
    <original>S</original>
    <variation>I</variation>
    <location>
        <position position="206"/>
    </location>
</feature>
<feature type="sequence conflict" description="In Ref. 1; AAD09433." evidence="2" ref="1">
    <original>T</original>
    <variation>R</variation>
    <location>
        <position position="212"/>
    </location>
</feature>
<comment type="function">
    <text evidence="1">Involved in the biosynthesis of the chorismate, which leads to the biosynthesis of aromatic amino acids. Catalyzes the reversible NADPH linked reduction of 3-dehydroshikimate (DHSA) to yield shikimate (SA).</text>
</comment>
<comment type="catalytic activity">
    <reaction evidence="1">
        <text>shikimate + NADP(+) = 3-dehydroshikimate + NADPH + H(+)</text>
        <dbReference type="Rhea" id="RHEA:17737"/>
        <dbReference type="ChEBI" id="CHEBI:15378"/>
        <dbReference type="ChEBI" id="CHEBI:16630"/>
        <dbReference type="ChEBI" id="CHEBI:36208"/>
        <dbReference type="ChEBI" id="CHEBI:57783"/>
        <dbReference type="ChEBI" id="CHEBI:58349"/>
        <dbReference type="EC" id="1.1.1.25"/>
    </reaction>
</comment>
<comment type="pathway">
    <text evidence="1">Metabolic intermediate biosynthesis; chorismate biosynthesis; chorismate from D-erythrose 4-phosphate and phosphoenolpyruvate: step 4/7.</text>
</comment>
<comment type="subunit">
    <text evidence="1">Homodimer.</text>
</comment>
<comment type="similarity">
    <text evidence="1">Belongs to the shikimate dehydrogenase family.</text>
</comment>
<dbReference type="EC" id="1.1.1.25" evidence="1"/>
<dbReference type="EMBL" id="U09230">
    <property type="protein sequence ID" value="AAD09433.1"/>
    <property type="molecule type" value="Genomic_DNA"/>
</dbReference>
<dbReference type="EMBL" id="AE013218">
    <property type="protein sequence ID" value="AAM68017.1"/>
    <property type="molecule type" value="Genomic_DNA"/>
</dbReference>
<dbReference type="RefSeq" id="WP_011053983.1">
    <property type="nucleotide sequence ID" value="NC_004061.1"/>
</dbReference>
<dbReference type="SMR" id="P46240"/>
<dbReference type="STRING" id="198804.BUsg_474"/>
<dbReference type="GeneID" id="93003949"/>
<dbReference type="KEGG" id="bas:BUsg_474"/>
<dbReference type="eggNOG" id="COG0169">
    <property type="taxonomic scope" value="Bacteria"/>
</dbReference>
<dbReference type="HOGENOM" id="CLU_044063_2_1_6"/>
<dbReference type="UniPathway" id="UPA00053">
    <property type="reaction ID" value="UER00087"/>
</dbReference>
<dbReference type="Proteomes" id="UP000000416">
    <property type="component" value="Chromosome"/>
</dbReference>
<dbReference type="GO" id="GO:0005829">
    <property type="term" value="C:cytosol"/>
    <property type="evidence" value="ECO:0007669"/>
    <property type="project" value="TreeGrafter"/>
</dbReference>
<dbReference type="GO" id="GO:0050661">
    <property type="term" value="F:NADP binding"/>
    <property type="evidence" value="ECO:0007669"/>
    <property type="project" value="InterPro"/>
</dbReference>
<dbReference type="GO" id="GO:0004764">
    <property type="term" value="F:shikimate 3-dehydrogenase (NADP+) activity"/>
    <property type="evidence" value="ECO:0007669"/>
    <property type="project" value="UniProtKB-UniRule"/>
</dbReference>
<dbReference type="GO" id="GO:0008652">
    <property type="term" value="P:amino acid biosynthetic process"/>
    <property type="evidence" value="ECO:0007669"/>
    <property type="project" value="UniProtKB-KW"/>
</dbReference>
<dbReference type="GO" id="GO:0009073">
    <property type="term" value="P:aromatic amino acid family biosynthetic process"/>
    <property type="evidence" value="ECO:0007669"/>
    <property type="project" value="UniProtKB-KW"/>
</dbReference>
<dbReference type="GO" id="GO:0009423">
    <property type="term" value="P:chorismate biosynthetic process"/>
    <property type="evidence" value="ECO:0007669"/>
    <property type="project" value="UniProtKB-UniRule"/>
</dbReference>
<dbReference type="GO" id="GO:0019632">
    <property type="term" value="P:shikimate metabolic process"/>
    <property type="evidence" value="ECO:0007669"/>
    <property type="project" value="InterPro"/>
</dbReference>
<dbReference type="CDD" id="cd01065">
    <property type="entry name" value="NAD_bind_Shikimate_DH"/>
    <property type="match status" value="1"/>
</dbReference>
<dbReference type="FunFam" id="3.40.50.10860:FF:000006">
    <property type="entry name" value="Shikimate dehydrogenase (NADP(+))"/>
    <property type="match status" value="1"/>
</dbReference>
<dbReference type="Gene3D" id="3.40.50.10860">
    <property type="entry name" value="Leucine Dehydrogenase, chain A, domain 1"/>
    <property type="match status" value="1"/>
</dbReference>
<dbReference type="Gene3D" id="3.40.50.720">
    <property type="entry name" value="NAD(P)-binding Rossmann-like Domain"/>
    <property type="match status" value="1"/>
</dbReference>
<dbReference type="HAMAP" id="MF_00222">
    <property type="entry name" value="Shikimate_DH_AroE"/>
    <property type="match status" value="1"/>
</dbReference>
<dbReference type="InterPro" id="IPR046346">
    <property type="entry name" value="Aminoacid_DH-like_N_sf"/>
</dbReference>
<dbReference type="InterPro" id="IPR036291">
    <property type="entry name" value="NAD(P)-bd_dom_sf"/>
</dbReference>
<dbReference type="InterPro" id="IPR011342">
    <property type="entry name" value="Shikimate_DH"/>
</dbReference>
<dbReference type="InterPro" id="IPR013708">
    <property type="entry name" value="Shikimate_DH-bd_N"/>
</dbReference>
<dbReference type="InterPro" id="IPR022893">
    <property type="entry name" value="Shikimate_DH_fam"/>
</dbReference>
<dbReference type="InterPro" id="IPR006151">
    <property type="entry name" value="Shikm_DH/Glu-tRNA_Rdtase"/>
</dbReference>
<dbReference type="NCBIfam" id="TIGR00507">
    <property type="entry name" value="aroE"/>
    <property type="match status" value="1"/>
</dbReference>
<dbReference type="NCBIfam" id="NF001310">
    <property type="entry name" value="PRK00258.1-2"/>
    <property type="match status" value="1"/>
</dbReference>
<dbReference type="PANTHER" id="PTHR21089:SF1">
    <property type="entry name" value="BIFUNCTIONAL 3-DEHYDROQUINATE DEHYDRATASE_SHIKIMATE DEHYDROGENASE, CHLOROPLASTIC"/>
    <property type="match status" value="1"/>
</dbReference>
<dbReference type="PANTHER" id="PTHR21089">
    <property type="entry name" value="SHIKIMATE DEHYDROGENASE"/>
    <property type="match status" value="1"/>
</dbReference>
<dbReference type="Pfam" id="PF01488">
    <property type="entry name" value="Shikimate_DH"/>
    <property type="match status" value="1"/>
</dbReference>
<dbReference type="Pfam" id="PF08501">
    <property type="entry name" value="Shikimate_dh_N"/>
    <property type="match status" value="1"/>
</dbReference>
<dbReference type="SUPFAM" id="SSF53223">
    <property type="entry name" value="Aminoacid dehydrogenase-like, N-terminal domain"/>
    <property type="match status" value="1"/>
</dbReference>
<dbReference type="SUPFAM" id="SSF51735">
    <property type="entry name" value="NAD(P)-binding Rossmann-fold domains"/>
    <property type="match status" value="1"/>
</dbReference>
<proteinExistence type="inferred from homology"/>